<protein>
    <recommendedName>
        <fullName evidence="1">Catalase-peroxidase</fullName>
        <shortName evidence="1">CP</shortName>
        <ecNumber evidence="1">1.11.1.21</ecNumber>
    </recommendedName>
    <alternativeName>
        <fullName evidence="1">Peroxidase/catalase</fullName>
    </alternativeName>
</protein>
<comment type="function">
    <text evidence="1">Bifunctional enzyme with both catalase and broad-spectrum peroxidase activity.</text>
</comment>
<comment type="catalytic activity">
    <reaction evidence="1">
        <text>H2O2 + AH2 = A + 2 H2O</text>
        <dbReference type="Rhea" id="RHEA:30275"/>
        <dbReference type="ChEBI" id="CHEBI:13193"/>
        <dbReference type="ChEBI" id="CHEBI:15377"/>
        <dbReference type="ChEBI" id="CHEBI:16240"/>
        <dbReference type="ChEBI" id="CHEBI:17499"/>
        <dbReference type="EC" id="1.11.1.21"/>
    </reaction>
</comment>
<comment type="catalytic activity">
    <reaction evidence="1">
        <text>2 H2O2 = O2 + 2 H2O</text>
        <dbReference type="Rhea" id="RHEA:20309"/>
        <dbReference type="ChEBI" id="CHEBI:15377"/>
        <dbReference type="ChEBI" id="CHEBI:15379"/>
        <dbReference type="ChEBI" id="CHEBI:16240"/>
        <dbReference type="EC" id="1.11.1.21"/>
    </reaction>
</comment>
<comment type="cofactor">
    <cofactor evidence="1">
        <name>heme b</name>
        <dbReference type="ChEBI" id="CHEBI:60344"/>
    </cofactor>
    <text evidence="1">Binds 1 heme b (iron(II)-protoporphyrin IX) group per dimer.</text>
</comment>
<comment type="subunit">
    <text evidence="1">Homodimer or homotetramer.</text>
</comment>
<comment type="PTM">
    <text evidence="1">Formation of the three residue Trp-Tyr-Met cross-link is important for the catalase, but not the peroxidase activity of the enzyme.</text>
</comment>
<comment type="similarity">
    <text evidence="1">Belongs to the peroxidase family. Peroxidase/catalase subfamily.</text>
</comment>
<keyword id="KW-0349">Heme</keyword>
<keyword id="KW-0376">Hydrogen peroxide</keyword>
<keyword id="KW-0408">Iron</keyword>
<keyword id="KW-0479">Metal-binding</keyword>
<keyword id="KW-0560">Oxidoreductase</keyword>
<keyword id="KW-0575">Peroxidase</keyword>
<sequence>MSEHSRCPVTGRTAGNPVAGGGIANRDWWPNQLHLDMLHQHSSLSNPMEEAFKYKEEFGKLDLKAVKKDLYTLMTDSQEWWPADYGHYGGLFIRMTWHSAGTYRTGDGRGGGGTGNQRFAPLNSWPDNANLDKARRLLWPIKQKYGKKLSWADLMILAGNYALESMGFKTFGFGGGRVDIWEPEEDIYWGKEVEWLDNKRYSGERDLENPLAAVQMGLIYVNPEGPDGKPDPVAAGKDIRETFGRMAMNDEETVALVAGGHTFGKCHGVGDPKLVGPEPEAADIEEQGLGWKSGYGSGKGDETMTSGLEGAWTPDPIHWDMGYLGMLFKYEWELTKSPAGAWQWKPTDVAEEDLAPAAHDPSKRVPTMMTTADLAMRMDPIYGPISRRYYEHPDQFADAFARAWFKLTHRDMGPKSRYLGTEVPEEDLIWQDPVPAVDHELIGDREIAELKKRLLASGLSIPELVSTAWASASTFRGSDKRGGANGARIRLAPQKDWEVNQPEQLKIVLQKLEEIRQEFNDAQSGGKRVSLADLIVLGGCAGVEEAARKAGTDVTIPFTPGRTDASQEQTDTESFAVLEPLADGFRNYMKKKYSVSAEEMLVDRSQLLTLTAPEMTVLVGGLRVLNVNFGQSPHGVFTTLPETLTNDFFVNLLDMGTEWKPLSKEHDTFEGRDRKTGEPRWTATRVDLIFGSNSRLRAIAEVYGSDNAQEKFVHDFVAAWNKVMNLDRFELG</sequence>
<feature type="chain" id="PRO_0000354759" description="Catalase-peroxidase">
    <location>
        <begin position="1"/>
        <end position="732"/>
    </location>
</feature>
<feature type="active site" description="Proton acceptor" evidence="1">
    <location>
        <position position="98"/>
    </location>
</feature>
<feature type="binding site" description="axial binding residue" evidence="1">
    <location>
        <position position="261"/>
    </location>
    <ligand>
        <name>heme b</name>
        <dbReference type="ChEBI" id="CHEBI:60344"/>
    </ligand>
    <ligandPart>
        <name>Fe</name>
        <dbReference type="ChEBI" id="CHEBI:18248"/>
    </ligandPart>
</feature>
<feature type="site" description="Transition state stabilizer" evidence="1">
    <location>
        <position position="94"/>
    </location>
</feature>
<feature type="cross-link" description="Tryptophyl-tyrosyl-methioninium (Trp-Tyr) (with M-246)" evidence="1">
    <location>
        <begin position="97"/>
        <end position="220"/>
    </location>
</feature>
<feature type="cross-link" description="Tryptophyl-tyrosyl-methioninium (Tyr-Met) (with W-97)" evidence="1">
    <location>
        <begin position="220"/>
        <end position="246"/>
    </location>
</feature>
<evidence type="ECO:0000255" key="1">
    <source>
        <dbReference type="HAMAP-Rule" id="MF_01961"/>
    </source>
</evidence>
<gene>
    <name evidence="1" type="primary">katG</name>
    <name type="ordered locus">Cphamn1_0152</name>
</gene>
<proteinExistence type="inferred from homology"/>
<reference key="1">
    <citation type="submission" date="2008-06" db="EMBL/GenBank/DDBJ databases">
        <title>Complete sequence of Chlorobium phaeobacteroides BS1.</title>
        <authorList>
            <consortium name="US DOE Joint Genome Institute"/>
            <person name="Lucas S."/>
            <person name="Copeland A."/>
            <person name="Lapidus A."/>
            <person name="Glavina del Rio T."/>
            <person name="Dalin E."/>
            <person name="Tice H."/>
            <person name="Bruce D."/>
            <person name="Goodwin L."/>
            <person name="Pitluck S."/>
            <person name="Schmutz J."/>
            <person name="Larimer F."/>
            <person name="Land M."/>
            <person name="Hauser L."/>
            <person name="Kyrpides N."/>
            <person name="Ovchinnikova G."/>
            <person name="Li T."/>
            <person name="Liu Z."/>
            <person name="Zhao F."/>
            <person name="Overmann J."/>
            <person name="Bryant D.A."/>
            <person name="Richardson P."/>
        </authorList>
    </citation>
    <scope>NUCLEOTIDE SEQUENCE [LARGE SCALE GENOMIC DNA]</scope>
    <source>
        <strain>BS1</strain>
    </source>
</reference>
<dbReference type="EC" id="1.11.1.21" evidence="1"/>
<dbReference type="EMBL" id="CP001101">
    <property type="protein sequence ID" value="ACE03127.1"/>
    <property type="molecule type" value="Genomic_DNA"/>
</dbReference>
<dbReference type="SMR" id="B3EKE9"/>
<dbReference type="STRING" id="331678.Cphamn1_0152"/>
<dbReference type="PeroxiBase" id="3650">
    <property type="entry name" value="CphCP01_BS1"/>
</dbReference>
<dbReference type="KEGG" id="cpb:Cphamn1_0152"/>
<dbReference type="eggNOG" id="COG0376">
    <property type="taxonomic scope" value="Bacteria"/>
</dbReference>
<dbReference type="HOGENOM" id="CLU_025424_2_0_10"/>
<dbReference type="OrthoDB" id="9759743at2"/>
<dbReference type="GO" id="GO:0005829">
    <property type="term" value="C:cytosol"/>
    <property type="evidence" value="ECO:0007669"/>
    <property type="project" value="TreeGrafter"/>
</dbReference>
<dbReference type="GO" id="GO:0004096">
    <property type="term" value="F:catalase activity"/>
    <property type="evidence" value="ECO:0007669"/>
    <property type="project" value="UniProtKB-UniRule"/>
</dbReference>
<dbReference type="GO" id="GO:0020037">
    <property type="term" value="F:heme binding"/>
    <property type="evidence" value="ECO:0007669"/>
    <property type="project" value="InterPro"/>
</dbReference>
<dbReference type="GO" id="GO:0046872">
    <property type="term" value="F:metal ion binding"/>
    <property type="evidence" value="ECO:0007669"/>
    <property type="project" value="UniProtKB-KW"/>
</dbReference>
<dbReference type="GO" id="GO:0070301">
    <property type="term" value="P:cellular response to hydrogen peroxide"/>
    <property type="evidence" value="ECO:0007669"/>
    <property type="project" value="TreeGrafter"/>
</dbReference>
<dbReference type="GO" id="GO:0042744">
    <property type="term" value="P:hydrogen peroxide catabolic process"/>
    <property type="evidence" value="ECO:0007669"/>
    <property type="project" value="UniProtKB-KW"/>
</dbReference>
<dbReference type="CDD" id="cd00649">
    <property type="entry name" value="catalase_peroxidase_1"/>
    <property type="match status" value="1"/>
</dbReference>
<dbReference type="CDD" id="cd08200">
    <property type="entry name" value="catalase_peroxidase_2"/>
    <property type="match status" value="1"/>
</dbReference>
<dbReference type="FunFam" id="1.10.420.10:FF:000002">
    <property type="entry name" value="Catalase-peroxidase"/>
    <property type="match status" value="1"/>
</dbReference>
<dbReference type="FunFam" id="1.10.420.10:FF:000004">
    <property type="entry name" value="Catalase-peroxidase"/>
    <property type="match status" value="1"/>
</dbReference>
<dbReference type="FunFam" id="1.10.520.10:FF:000002">
    <property type="entry name" value="Catalase-peroxidase"/>
    <property type="match status" value="1"/>
</dbReference>
<dbReference type="FunFam" id="1.10.520.10:FF:000004">
    <property type="entry name" value="Catalase-peroxidase"/>
    <property type="match status" value="1"/>
</dbReference>
<dbReference type="Gene3D" id="1.10.520.10">
    <property type="match status" value="2"/>
</dbReference>
<dbReference type="Gene3D" id="1.10.420.10">
    <property type="entry name" value="Peroxidase, domain 2"/>
    <property type="match status" value="2"/>
</dbReference>
<dbReference type="HAMAP" id="MF_01961">
    <property type="entry name" value="Catal_peroxid"/>
    <property type="match status" value="1"/>
</dbReference>
<dbReference type="InterPro" id="IPR000763">
    <property type="entry name" value="Catalase_peroxidase"/>
</dbReference>
<dbReference type="InterPro" id="IPR002016">
    <property type="entry name" value="Haem_peroxidase"/>
</dbReference>
<dbReference type="InterPro" id="IPR010255">
    <property type="entry name" value="Haem_peroxidase_sf"/>
</dbReference>
<dbReference type="InterPro" id="IPR019794">
    <property type="entry name" value="Peroxidases_AS"/>
</dbReference>
<dbReference type="InterPro" id="IPR019793">
    <property type="entry name" value="Peroxidases_heam-ligand_BS"/>
</dbReference>
<dbReference type="NCBIfam" id="TIGR00198">
    <property type="entry name" value="cat_per_HPI"/>
    <property type="match status" value="1"/>
</dbReference>
<dbReference type="NCBIfam" id="NF011635">
    <property type="entry name" value="PRK15061.1"/>
    <property type="match status" value="1"/>
</dbReference>
<dbReference type="PANTHER" id="PTHR30555:SF0">
    <property type="entry name" value="CATALASE-PEROXIDASE"/>
    <property type="match status" value="1"/>
</dbReference>
<dbReference type="PANTHER" id="PTHR30555">
    <property type="entry name" value="HYDROPEROXIDASE I, BIFUNCTIONAL CATALASE-PEROXIDASE"/>
    <property type="match status" value="1"/>
</dbReference>
<dbReference type="Pfam" id="PF00141">
    <property type="entry name" value="peroxidase"/>
    <property type="match status" value="2"/>
</dbReference>
<dbReference type="PRINTS" id="PR00460">
    <property type="entry name" value="BPEROXIDASE"/>
</dbReference>
<dbReference type="PRINTS" id="PR00458">
    <property type="entry name" value="PEROXIDASE"/>
</dbReference>
<dbReference type="SUPFAM" id="SSF48113">
    <property type="entry name" value="Heme-dependent peroxidases"/>
    <property type="match status" value="2"/>
</dbReference>
<dbReference type="PROSITE" id="PS00435">
    <property type="entry name" value="PEROXIDASE_1"/>
    <property type="match status" value="1"/>
</dbReference>
<dbReference type="PROSITE" id="PS00436">
    <property type="entry name" value="PEROXIDASE_2"/>
    <property type="match status" value="1"/>
</dbReference>
<dbReference type="PROSITE" id="PS50873">
    <property type="entry name" value="PEROXIDASE_4"/>
    <property type="match status" value="1"/>
</dbReference>
<name>KATG_CHLPB</name>
<organism>
    <name type="scientific">Chlorobium phaeobacteroides (strain BS1)</name>
    <dbReference type="NCBI Taxonomy" id="331678"/>
    <lineage>
        <taxon>Bacteria</taxon>
        <taxon>Pseudomonadati</taxon>
        <taxon>Chlorobiota</taxon>
        <taxon>Chlorobiia</taxon>
        <taxon>Chlorobiales</taxon>
        <taxon>Chlorobiaceae</taxon>
        <taxon>Chlorobium/Pelodictyon group</taxon>
        <taxon>Chlorobium</taxon>
    </lineage>
</organism>
<accession>B3EKE9</accession>